<keyword id="KW-1185">Reference proteome</keyword>
<accession>P32728</accession>
<proteinExistence type="predicted"/>
<reference key="1">
    <citation type="journal article" date="1993" name="J. Bacteriol.">
        <title>Similar organization of the nusA-infB operon in Bacillus subtilis and Escherichia coli.</title>
        <authorList>
            <person name="Shazand K."/>
            <person name="Tucker J."/>
            <person name="Grunberg-Manago M."/>
            <person name="Rabinowitz J.C."/>
            <person name="Leighton T."/>
        </authorList>
    </citation>
    <scope>NUCLEOTIDE SEQUENCE [GENOMIC DNA]</scope>
    <source>
        <strain>168</strain>
    </source>
</reference>
<reference key="2">
    <citation type="journal article" date="1997" name="Nature">
        <title>The complete genome sequence of the Gram-positive bacterium Bacillus subtilis.</title>
        <authorList>
            <person name="Kunst F."/>
            <person name="Ogasawara N."/>
            <person name="Moszer I."/>
            <person name="Albertini A.M."/>
            <person name="Alloni G."/>
            <person name="Azevedo V."/>
            <person name="Bertero M.G."/>
            <person name="Bessieres P."/>
            <person name="Bolotin A."/>
            <person name="Borchert S."/>
            <person name="Borriss R."/>
            <person name="Boursier L."/>
            <person name="Brans A."/>
            <person name="Braun M."/>
            <person name="Brignell S.C."/>
            <person name="Bron S."/>
            <person name="Brouillet S."/>
            <person name="Bruschi C.V."/>
            <person name="Caldwell B."/>
            <person name="Capuano V."/>
            <person name="Carter N.M."/>
            <person name="Choi S.-K."/>
            <person name="Codani J.-J."/>
            <person name="Connerton I.F."/>
            <person name="Cummings N.J."/>
            <person name="Daniel R.A."/>
            <person name="Denizot F."/>
            <person name="Devine K.M."/>
            <person name="Duesterhoeft A."/>
            <person name="Ehrlich S.D."/>
            <person name="Emmerson P.T."/>
            <person name="Entian K.-D."/>
            <person name="Errington J."/>
            <person name="Fabret C."/>
            <person name="Ferrari E."/>
            <person name="Foulger D."/>
            <person name="Fritz C."/>
            <person name="Fujita M."/>
            <person name="Fujita Y."/>
            <person name="Fuma S."/>
            <person name="Galizzi A."/>
            <person name="Galleron N."/>
            <person name="Ghim S.-Y."/>
            <person name="Glaser P."/>
            <person name="Goffeau A."/>
            <person name="Golightly E.J."/>
            <person name="Grandi G."/>
            <person name="Guiseppi G."/>
            <person name="Guy B.J."/>
            <person name="Haga K."/>
            <person name="Haiech J."/>
            <person name="Harwood C.R."/>
            <person name="Henaut A."/>
            <person name="Hilbert H."/>
            <person name="Holsappel S."/>
            <person name="Hosono S."/>
            <person name="Hullo M.-F."/>
            <person name="Itaya M."/>
            <person name="Jones L.-M."/>
            <person name="Joris B."/>
            <person name="Karamata D."/>
            <person name="Kasahara Y."/>
            <person name="Klaerr-Blanchard M."/>
            <person name="Klein C."/>
            <person name="Kobayashi Y."/>
            <person name="Koetter P."/>
            <person name="Koningstein G."/>
            <person name="Krogh S."/>
            <person name="Kumano M."/>
            <person name="Kurita K."/>
            <person name="Lapidus A."/>
            <person name="Lardinois S."/>
            <person name="Lauber J."/>
            <person name="Lazarevic V."/>
            <person name="Lee S.-M."/>
            <person name="Levine A."/>
            <person name="Liu H."/>
            <person name="Masuda S."/>
            <person name="Mauel C."/>
            <person name="Medigue C."/>
            <person name="Medina N."/>
            <person name="Mellado R.P."/>
            <person name="Mizuno M."/>
            <person name="Moestl D."/>
            <person name="Nakai S."/>
            <person name="Noback M."/>
            <person name="Noone D."/>
            <person name="O'Reilly M."/>
            <person name="Ogawa K."/>
            <person name="Ogiwara A."/>
            <person name="Oudega B."/>
            <person name="Park S.-H."/>
            <person name="Parro V."/>
            <person name="Pohl T.M."/>
            <person name="Portetelle D."/>
            <person name="Porwollik S."/>
            <person name="Prescott A.M."/>
            <person name="Presecan E."/>
            <person name="Pujic P."/>
            <person name="Purnelle B."/>
            <person name="Rapoport G."/>
            <person name="Rey M."/>
            <person name="Reynolds S."/>
            <person name="Rieger M."/>
            <person name="Rivolta C."/>
            <person name="Rocha E."/>
            <person name="Roche B."/>
            <person name="Rose M."/>
            <person name="Sadaie Y."/>
            <person name="Sato T."/>
            <person name="Scanlan E."/>
            <person name="Schleich S."/>
            <person name="Schroeter R."/>
            <person name="Scoffone F."/>
            <person name="Sekiguchi J."/>
            <person name="Sekowska A."/>
            <person name="Seror S.J."/>
            <person name="Serror P."/>
            <person name="Shin B.-S."/>
            <person name="Soldo B."/>
            <person name="Sorokin A."/>
            <person name="Tacconi E."/>
            <person name="Takagi T."/>
            <person name="Takahashi H."/>
            <person name="Takemaru K."/>
            <person name="Takeuchi M."/>
            <person name="Tamakoshi A."/>
            <person name="Tanaka T."/>
            <person name="Terpstra P."/>
            <person name="Tognoni A."/>
            <person name="Tosato V."/>
            <person name="Uchiyama S."/>
            <person name="Vandenbol M."/>
            <person name="Vannier F."/>
            <person name="Vassarotti A."/>
            <person name="Viari A."/>
            <person name="Wambutt R."/>
            <person name="Wedler E."/>
            <person name="Wedler H."/>
            <person name="Weitzenegger T."/>
            <person name="Winters P."/>
            <person name="Wipat A."/>
            <person name="Yamamoto H."/>
            <person name="Yamane K."/>
            <person name="Yasumoto K."/>
            <person name="Yata K."/>
            <person name="Yoshida K."/>
            <person name="Yoshikawa H.-F."/>
            <person name="Zumstein E."/>
            <person name="Yoshikawa H."/>
            <person name="Danchin A."/>
        </authorList>
    </citation>
    <scope>NUCLEOTIDE SEQUENCE [LARGE SCALE GENOMIC DNA]</scope>
    <source>
        <strain>168</strain>
    </source>
</reference>
<feature type="chain" id="PRO_0000049629" description="Uncharacterized protein YlxR">
    <location>
        <begin position="1"/>
        <end position="91"/>
    </location>
</feature>
<protein>
    <recommendedName>
        <fullName>Uncharacterized protein YlxR</fullName>
    </recommendedName>
    <alternativeName>
        <fullName>ORF3</fullName>
    </alternativeName>
</protein>
<name>YLXR_BACSU</name>
<organism>
    <name type="scientific">Bacillus subtilis (strain 168)</name>
    <dbReference type="NCBI Taxonomy" id="224308"/>
    <lineage>
        <taxon>Bacteria</taxon>
        <taxon>Bacillati</taxon>
        <taxon>Bacillota</taxon>
        <taxon>Bacilli</taxon>
        <taxon>Bacillales</taxon>
        <taxon>Bacillaceae</taxon>
        <taxon>Bacillus</taxon>
    </lineage>
</organism>
<sequence length="91" mass="10409">MNKHKKIPLRKCVVTGEMKPKKELIRVVRSKEGEISVDPTGKKNGRGAYLTLDKECILAAKKKNTLQNQFQSQIDDQIFDELLELAEKVKK</sequence>
<gene>
    <name type="primary">ylxR</name>
    <name type="synonym">ymxB</name>
    <name type="ordered locus">BSU16610</name>
</gene>
<dbReference type="EMBL" id="Z18631">
    <property type="protein sequence ID" value="CAA79232.1"/>
    <property type="molecule type" value="Genomic_DNA"/>
</dbReference>
<dbReference type="EMBL" id="AL009126">
    <property type="protein sequence ID" value="CAB13534.1"/>
    <property type="molecule type" value="Genomic_DNA"/>
</dbReference>
<dbReference type="PIR" id="D36905">
    <property type="entry name" value="D36905"/>
</dbReference>
<dbReference type="RefSeq" id="WP_009967250.1">
    <property type="nucleotide sequence ID" value="NZ_OZ025638.1"/>
</dbReference>
<dbReference type="SMR" id="P32728"/>
<dbReference type="FunCoup" id="P32728">
    <property type="interactions" value="91"/>
</dbReference>
<dbReference type="STRING" id="224308.BSU16610"/>
<dbReference type="PaxDb" id="224308-BSU16610"/>
<dbReference type="EnsemblBacteria" id="CAB13534">
    <property type="protein sequence ID" value="CAB13534"/>
    <property type="gene ID" value="BSU_16610"/>
</dbReference>
<dbReference type="GeneID" id="939653"/>
<dbReference type="KEGG" id="bsu:BSU16610"/>
<dbReference type="PATRIC" id="fig|224308.179.peg.1802"/>
<dbReference type="eggNOG" id="COG2740">
    <property type="taxonomic scope" value="Bacteria"/>
</dbReference>
<dbReference type="InParanoid" id="P32728"/>
<dbReference type="OrthoDB" id="9813251at2"/>
<dbReference type="PhylomeDB" id="P32728"/>
<dbReference type="BioCyc" id="BSUB:BSU16610-MONOMER"/>
<dbReference type="Proteomes" id="UP000001570">
    <property type="component" value="Chromosome"/>
</dbReference>
<dbReference type="CDD" id="cd00279">
    <property type="entry name" value="YlxR"/>
    <property type="match status" value="1"/>
</dbReference>
<dbReference type="Gene3D" id="3.30.1230.10">
    <property type="entry name" value="YlxR-like"/>
    <property type="match status" value="1"/>
</dbReference>
<dbReference type="InterPro" id="IPR037465">
    <property type="entry name" value="YlxR"/>
</dbReference>
<dbReference type="InterPro" id="IPR035931">
    <property type="entry name" value="YlxR-like_sf"/>
</dbReference>
<dbReference type="InterPro" id="IPR007393">
    <property type="entry name" value="YlxR_dom"/>
</dbReference>
<dbReference type="NCBIfam" id="NF047356">
    <property type="entry name" value="RNA_bind_RnpM"/>
    <property type="match status" value="1"/>
</dbReference>
<dbReference type="PANTHER" id="PTHR34215">
    <property type="entry name" value="BLL0784 PROTEIN"/>
    <property type="match status" value="1"/>
</dbReference>
<dbReference type="PANTHER" id="PTHR34215:SF1">
    <property type="entry name" value="YLXR DOMAIN-CONTAINING PROTEIN"/>
    <property type="match status" value="1"/>
</dbReference>
<dbReference type="Pfam" id="PF04296">
    <property type="entry name" value="YlxR"/>
    <property type="match status" value="1"/>
</dbReference>
<dbReference type="SUPFAM" id="SSF64376">
    <property type="entry name" value="YlxR-like"/>
    <property type="match status" value="1"/>
</dbReference>